<keyword id="KW-0031">Aminopeptidase</keyword>
<keyword id="KW-0963">Cytoplasm</keyword>
<keyword id="KW-0378">Hydrolase</keyword>
<keyword id="KW-0464">Manganese</keyword>
<keyword id="KW-0479">Metal-binding</keyword>
<keyword id="KW-0645">Protease</keyword>
<protein>
    <recommendedName>
        <fullName evidence="1">Probable cytosol aminopeptidase</fullName>
        <ecNumber evidence="1">3.4.11.1</ecNumber>
    </recommendedName>
    <alternativeName>
        <fullName evidence="1">Leucine aminopeptidase</fullName>
        <shortName evidence="1">LAP</shortName>
        <ecNumber evidence="1">3.4.11.10</ecNumber>
    </alternativeName>
    <alternativeName>
        <fullName evidence="1">Leucyl aminopeptidase</fullName>
    </alternativeName>
</protein>
<proteinExistence type="inferred from homology"/>
<dbReference type="EC" id="3.4.11.1" evidence="1"/>
<dbReference type="EC" id="3.4.11.10" evidence="1"/>
<dbReference type="EMBL" id="CP000075">
    <property type="protein sequence ID" value="AAY36145.1"/>
    <property type="molecule type" value="Genomic_DNA"/>
</dbReference>
<dbReference type="RefSeq" id="WP_011266820.1">
    <property type="nucleotide sequence ID" value="NC_007005.1"/>
</dbReference>
<dbReference type="RefSeq" id="YP_234183.1">
    <property type="nucleotide sequence ID" value="NC_007005.1"/>
</dbReference>
<dbReference type="SMR" id="Q4ZXH7"/>
<dbReference type="STRING" id="205918.Psyr_1091"/>
<dbReference type="MEROPS" id="M17.003"/>
<dbReference type="KEGG" id="psb:Psyr_1091"/>
<dbReference type="PATRIC" id="fig|205918.7.peg.1122"/>
<dbReference type="eggNOG" id="COG0260">
    <property type="taxonomic scope" value="Bacteria"/>
</dbReference>
<dbReference type="HOGENOM" id="CLU_013734_2_2_6"/>
<dbReference type="OrthoDB" id="9809354at2"/>
<dbReference type="Proteomes" id="UP000000426">
    <property type="component" value="Chromosome"/>
</dbReference>
<dbReference type="GO" id="GO:0005737">
    <property type="term" value="C:cytoplasm"/>
    <property type="evidence" value="ECO:0007669"/>
    <property type="project" value="UniProtKB-SubCell"/>
</dbReference>
<dbReference type="GO" id="GO:0030145">
    <property type="term" value="F:manganese ion binding"/>
    <property type="evidence" value="ECO:0007669"/>
    <property type="project" value="UniProtKB-UniRule"/>
</dbReference>
<dbReference type="GO" id="GO:0070006">
    <property type="term" value="F:metalloaminopeptidase activity"/>
    <property type="evidence" value="ECO:0007669"/>
    <property type="project" value="InterPro"/>
</dbReference>
<dbReference type="GO" id="GO:0006508">
    <property type="term" value="P:proteolysis"/>
    <property type="evidence" value="ECO:0007669"/>
    <property type="project" value="UniProtKB-KW"/>
</dbReference>
<dbReference type="CDD" id="cd00433">
    <property type="entry name" value="Peptidase_M17"/>
    <property type="match status" value="1"/>
</dbReference>
<dbReference type="FunFam" id="3.40.220.10:FF:000001">
    <property type="entry name" value="Probable cytosol aminopeptidase"/>
    <property type="match status" value="1"/>
</dbReference>
<dbReference type="FunFam" id="3.40.630.10:FF:000004">
    <property type="entry name" value="Probable cytosol aminopeptidase"/>
    <property type="match status" value="1"/>
</dbReference>
<dbReference type="Gene3D" id="3.40.220.10">
    <property type="entry name" value="Leucine Aminopeptidase, subunit E, domain 1"/>
    <property type="match status" value="1"/>
</dbReference>
<dbReference type="Gene3D" id="3.40.630.10">
    <property type="entry name" value="Zn peptidases"/>
    <property type="match status" value="1"/>
</dbReference>
<dbReference type="HAMAP" id="MF_00181">
    <property type="entry name" value="Cytosol_peptidase_M17"/>
    <property type="match status" value="1"/>
</dbReference>
<dbReference type="InterPro" id="IPR011356">
    <property type="entry name" value="Leucine_aapep/pepB"/>
</dbReference>
<dbReference type="InterPro" id="IPR043472">
    <property type="entry name" value="Macro_dom-like"/>
</dbReference>
<dbReference type="InterPro" id="IPR000819">
    <property type="entry name" value="Peptidase_M17_C"/>
</dbReference>
<dbReference type="InterPro" id="IPR023042">
    <property type="entry name" value="Peptidase_M17_leu_NH2_pept"/>
</dbReference>
<dbReference type="InterPro" id="IPR008283">
    <property type="entry name" value="Peptidase_M17_N"/>
</dbReference>
<dbReference type="NCBIfam" id="NF002073">
    <property type="entry name" value="PRK00913.1-2"/>
    <property type="match status" value="1"/>
</dbReference>
<dbReference type="NCBIfam" id="NF002074">
    <property type="entry name" value="PRK00913.1-4"/>
    <property type="match status" value="1"/>
</dbReference>
<dbReference type="NCBIfam" id="NF002077">
    <property type="entry name" value="PRK00913.2-4"/>
    <property type="match status" value="1"/>
</dbReference>
<dbReference type="PANTHER" id="PTHR11963:SF23">
    <property type="entry name" value="CYTOSOL AMINOPEPTIDASE"/>
    <property type="match status" value="1"/>
</dbReference>
<dbReference type="PANTHER" id="PTHR11963">
    <property type="entry name" value="LEUCINE AMINOPEPTIDASE-RELATED"/>
    <property type="match status" value="1"/>
</dbReference>
<dbReference type="Pfam" id="PF00883">
    <property type="entry name" value="Peptidase_M17"/>
    <property type="match status" value="1"/>
</dbReference>
<dbReference type="Pfam" id="PF02789">
    <property type="entry name" value="Peptidase_M17_N"/>
    <property type="match status" value="1"/>
</dbReference>
<dbReference type="PRINTS" id="PR00481">
    <property type="entry name" value="LAMNOPPTDASE"/>
</dbReference>
<dbReference type="SUPFAM" id="SSF52949">
    <property type="entry name" value="Macro domain-like"/>
    <property type="match status" value="1"/>
</dbReference>
<dbReference type="SUPFAM" id="SSF53187">
    <property type="entry name" value="Zn-dependent exopeptidases"/>
    <property type="match status" value="1"/>
</dbReference>
<dbReference type="PROSITE" id="PS00631">
    <property type="entry name" value="CYTOSOL_AP"/>
    <property type="match status" value="1"/>
</dbReference>
<feature type="chain" id="PRO_1000019959" description="Probable cytosol aminopeptidase">
    <location>
        <begin position="1"/>
        <end position="496"/>
    </location>
</feature>
<feature type="active site" evidence="1">
    <location>
        <position position="278"/>
    </location>
</feature>
<feature type="active site" evidence="1">
    <location>
        <position position="352"/>
    </location>
</feature>
<feature type="binding site" evidence="1">
    <location>
        <position position="266"/>
    </location>
    <ligand>
        <name>Mn(2+)</name>
        <dbReference type="ChEBI" id="CHEBI:29035"/>
        <label>2</label>
    </ligand>
</feature>
<feature type="binding site" evidence="1">
    <location>
        <position position="271"/>
    </location>
    <ligand>
        <name>Mn(2+)</name>
        <dbReference type="ChEBI" id="CHEBI:29035"/>
        <label>1</label>
    </ligand>
</feature>
<feature type="binding site" evidence="1">
    <location>
        <position position="271"/>
    </location>
    <ligand>
        <name>Mn(2+)</name>
        <dbReference type="ChEBI" id="CHEBI:29035"/>
        <label>2</label>
    </ligand>
</feature>
<feature type="binding site" evidence="1">
    <location>
        <position position="289"/>
    </location>
    <ligand>
        <name>Mn(2+)</name>
        <dbReference type="ChEBI" id="CHEBI:29035"/>
        <label>2</label>
    </ligand>
</feature>
<feature type="binding site" evidence="1">
    <location>
        <position position="348"/>
    </location>
    <ligand>
        <name>Mn(2+)</name>
        <dbReference type="ChEBI" id="CHEBI:29035"/>
        <label>1</label>
    </ligand>
</feature>
<feature type="binding site" evidence="1">
    <location>
        <position position="350"/>
    </location>
    <ligand>
        <name>Mn(2+)</name>
        <dbReference type="ChEBI" id="CHEBI:29035"/>
        <label>1</label>
    </ligand>
</feature>
<feature type="binding site" evidence="1">
    <location>
        <position position="350"/>
    </location>
    <ligand>
        <name>Mn(2+)</name>
        <dbReference type="ChEBI" id="CHEBI:29035"/>
        <label>2</label>
    </ligand>
</feature>
<organism>
    <name type="scientific">Pseudomonas syringae pv. syringae (strain B728a)</name>
    <dbReference type="NCBI Taxonomy" id="205918"/>
    <lineage>
        <taxon>Bacteria</taxon>
        <taxon>Pseudomonadati</taxon>
        <taxon>Pseudomonadota</taxon>
        <taxon>Gammaproteobacteria</taxon>
        <taxon>Pseudomonadales</taxon>
        <taxon>Pseudomonadaceae</taxon>
        <taxon>Pseudomonas</taxon>
        <taxon>Pseudomonas syringae</taxon>
    </lineage>
</organism>
<evidence type="ECO:0000255" key="1">
    <source>
        <dbReference type="HAMAP-Rule" id="MF_00181"/>
    </source>
</evidence>
<sequence>MELVVKSVSPETLKTATLVVTVGESRVLAGAARTVDILSGGAVSLILKRGDLAGKVGQSLLLHNLPNIKAERVLLVGTGKEDELSDRQLKKIVGAALTCLKGLGGTDAAIALDDLSVKNRDTYGMARLLVEALADGEYVFDRFKTQKAEVRALKKITLLTDKVKAADVERASTHAQAIATGMALTRDLGNLPPNICHPTYLGEEAKALGKAHKNLKVEVHDEKKLADLGMGSFLAVAQGSAQPPRLIVMNYQGGKKGDQPFVLVGKGITFDTGGISIKPASGMDEMKFDMCGAASVFGTLRAVLELKLPINLVCILACAENMPSGTATRPGDIVTTMSGQTVEILNTDAEGRLVLCDALTYAERFKPQAVIDIATLTGACVVALGGHTSGLLGNNDALINQLLDAGKQADDRAWQLPLFDEYQEQLDSPFADIANIGGPKGGTITAACFLSRFTKAYHWAHLDIAGTAWLSGGKEKGATGRPVPLLTQYLLDRAGV</sequence>
<name>AMPA_PSEU2</name>
<accession>Q4ZXH7</accession>
<comment type="function">
    <text evidence="1">Presumably involved in the processing and regular turnover of intracellular proteins. Catalyzes the removal of unsubstituted N-terminal amino acids from various peptides.</text>
</comment>
<comment type="catalytic activity">
    <reaction evidence="1">
        <text>Release of an N-terminal amino acid, Xaa-|-Yaa-, in which Xaa is preferably Leu, but may be other amino acids including Pro although not Arg or Lys, and Yaa may be Pro. Amino acid amides and methyl esters are also readily hydrolyzed, but rates on arylamides are exceedingly low.</text>
        <dbReference type="EC" id="3.4.11.1"/>
    </reaction>
</comment>
<comment type="catalytic activity">
    <reaction evidence="1">
        <text>Release of an N-terminal amino acid, preferentially leucine, but not glutamic or aspartic acids.</text>
        <dbReference type="EC" id="3.4.11.10"/>
    </reaction>
</comment>
<comment type="cofactor">
    <cofactor evidence="1">
        <name>Mn(2+)</name>
        <dbReference type="ChEBI" id="CHEBI:29035"/>
    </cofactor>
    <text evidence="1">Binds 2 manganese ions per subunit.</text>
</comment>
<comment type="subcellular location">
    <subcellularLocation>
        <location evidence="1">Cytoplasm</location>
    </subcellularLocation>
</comment>
<comment type="similarity">
    <text evidence="1">Belongs to the peptidase M17 family.</text>
</comment>
<gene>
    <name evidence="1" type="primary">pepA</name>
    <name type="ordered locus">Psyr_1091</name>
</gene>
<reference key="1">
    <citation type="journal article" date="2005" name="Proc. Natl. Acad. Sci. U.S.A.">
        <title>Comparison of the complete genome sequences of Pseudomonas syringae pv. syringae B728a and pv. tomato DC3000.</title>
        <authorList>
            <person name="Feil H."/>
            <person name="Feil W.S."/>
            <person name="Chain P."/>
            <person name="Larimer F."/>
            <person name="Dibartolo G."/>
            <person name="Copeland A."/>
            <person name="Lykidis A."/>
            <person name="Trong S."/>
            <person name="Nolan M."/>
            <person name="Goltsman E."/>
            <person name="Thiel J."/>
            <person name="Malfatti S."/>
            <person name="Loper J.E."/>
            <person name="Lapidus A."/>
            <person name="Detter J.C."/>
            <person name="Land M."/>
            <person name="Richardson P.M."/>
            <person name="Kyrpides N.C."/>
            <person name="Ivanova N."/>
            <person name="Lindow S.E."/>
        </authorList>
    </citation>
    <scope>NUCLEOTIDE SEQUENCE [LARGE SCALE GENOMIC DNA]</scope>
    <source>
        <strain>B728a</strain>
    </source>
</reference>